<evidence type="ECO:0000250" key="1"/>
<evidence type="ECO:0000255" key="2"/>
<keyword id="KW-0238">DNA-binding</keyword>
<keyword id="KW-0269">Exonuclease</keyword>
<keyword id="KW-0378">Hydrolase</keyword>
<keyword id="KW-0540">Nuclease</keyword>
<keyword id="KW-1185">Reference proteome</keyword>
<comment type="function">
    <text evidence="1">5'-3' exonuclease acting preferentially on double-stranded DNA.</text>
</comment>
<dbReference type="EC" id="3.1.11.-"/>
<dbReference type="EMBL" id="U00089">
    <property type="protein sequence ID" value="AAB96106.1"/>
    <property type="molecule type" value="Genomic_DNA"/>
</dbReference>
<dbReference type="PIR" id="S73784">
    <property type="entry name" value="S73784"/>
</dbReference>
<dbReference type="RefSeq" id="NP_110067.1">
    <property type="nucleotide sequence ID" value="NC_000912.1"/>
</dbReference>
<dbReference type="RefSeq" id="WP_010874735.1">
    <property type="nucleotide sequence ID" value="NZ_OU342337.1"/>
</dbReference>
<dbReference type="SMR" id="P75403"/>
<dbReference type="IntAct" id="P75403">
    <property type="interactions" value="3"/>
</dbReference>
<dbReference type="STRING" id="272634.MPN_379"/>
<dbReference type="EnsemblBacteria" id="AAB96106">
    <property type="protein sequence ID" value="AAB96106"/>
    <property type="gene ID" value="MPN_379"/>
</dbReference>
<dbReference type="KEGG" id="mpn:MPN_379"/>
<dbReference type="PATRIC" id="fig|272634.6.peg.410"/>
<dbReference type="HOGENOM" id="CLU_004675_1_5_14"/>
<dbReference type="OrthoDB" id="9806424at2"/>
<dbReference type="BioCyc" id="MPNE272634:G1GJ3-600-MONOMER"/>
<dbReference type="Proteomes" id="UP000000808">
    <property type="component" value="Chromosome"/>
</dbReference>
<dbReference type="GO" id="GO:0008409">
    <property type="term" value="F:5'-3' exonuclease activity"/>
    <property type="evidence" value="ECO:0007669"/>
    <property type="project" value="InterPro"/>
</dbReference>
<dbReference type="GO" id="GO:0017108">
    <property type="term" value="F:5'-flap endonuclease activity"/>
    <property type="evidence" value="ECO:0007669"/>
    <property type="project" value="InterPro"/>
</dbReference>
<dbReference type="GO" id="GO:0003677">
    <property type="term" value="F:DNA binding"/>
    <property type="evidence" value="ECO:0007669"/>
    <property type="project" value="UniProtKB-KW"/>
</dbReference>
<dbReference type="GO" id="GO:0033567">
    <property type="term" value="P:DNA replication, Okazaki fragment processing"/>
    <property type="evidence" value="ECO:0007669"/>
    <property type="project" value="InterPro"/>
</dbReference>
<dbReference type="CDD" id="cd09898">
    <property type="entry name" value="H3TH_53EXO"/>
    <property type="match status" value="1"/>
</dbReference>
<dbReference type="CDD" id="cd09859">
    <property type="entry name" value="PIN_53EXO"/>
    <property type="match status" value="1"/>
</dbReference>
<dbReference type="FunFam" id="1.10.150.20:FF:000003">
    <property type="entry name" value="DNA polymerase I"/>
    <property type="match status" value="1"/>
</dbReference>
<dbReference type="Gene3D" id="1.10.150.20">
    <property type="entry name" value="5' to 3' exonuclease, C-terminal subdomain"/>
    <property type="match status" value="1"/>
</dbReference>
<dbReference type="Gene3D" id="3.40.50.1010">
    <property type="entry name" value="5'-nuclease"/>
    <property type="match status" value="1"/>
</dbReference>
<dbReference type="InterPro" id="IPR020046">
    <property type="entry name" value="5-3_exonucl_a-hlix_arch_N"/>
</dbReference>
<dbReference type="InterPro" id="IPR002421">
    <property type="entry name" value="5-3_exonuclease"/>
</dbReference>
<dbReference type="InterPro" id="IPR036279">
    <property type="entry name" value="5-3_exonuclease_C_sf"/>
</dbReference>
<dbReference type="InterPro" id="IPR020045">
    <property type="entry name" value="DNA_polI_H3TH"/>
</dbReference>
<dbReference type="InterPro" id="IPR038969">
    <property type="entry name" value="FEN"/>
</dbReference>
<dbReference type="InterPro" id="IPR008918">
    <property type="entry name" value="HhH2"/>
</dbReference>
<dbReference type="InterPro" id="IPR029060">
    <property type="entry name" value="PIN-like_dom_sf"/>
</dbReference>
<dbReference type="NCBIfam" id="NF011547">
    <property type="entry name" value="PRK14976.1-4"/>
    <property type="match status" value="1"/>
</dbReference>
<dbReference type="PANTHER" id="PTHR42646:SF2">
    <property type="entry name" value="5'-3' EXONUCLEASE FAMILY PROTEIN"/>
    <property type="match status" value="1"/>
</dbReference>
<dbReference type="PANTHER" id="PTHR42646">
    <property type="entry name" value="FLAP ENDONUCLEASE XNI"/>
    <property type="match status" value="1"/>
</dbReference>
<dbReference type="Pfam" id="PF01367">
    <property type="entry name" value="5_3_exonuc"/>
    <property type="match status" value="1"/>
</dbReference>
<dbReference type="Pfam" id="PF02739">
    <property type="entry name" value="5_3_exonuc_N"/>
    <property type="match status" value="1"/>
</dbReference>
<dbReference type="SMART" id="SM00475">
    <property type="entry name" value="53EXOc"/>
    <property type="match status" value="1"/>
</dbReference>
<dbReference type="SMART" id="SM00279">
    <property type="entry name" value="HhH2"/>
    <property type="match status" value="1"/>
</dbReference>
<dbReference type="SUPFAM" id="SSF47807">
    <property type="entry name" value="5' to 3' exonuclease, C-terminal subdomain"/>
    <property type="match status" value="1"/>
</dbReference>
<dbReference type="SUPFAM" id="SSF88723">
    <property type="entry name" value="PIN domain-like"/>
    <property type="match status" value="1"/>
</dbReference>
<protein>
    <recommendedName>
        <fullName>5'-3' exonuclease</fullName>
        <ecNumber>3.1.11.-</ecNumber>
    </recommendedName>
</protein>
<sequence>MKNAILIDGNSLAYRAYFATWQQVEFAKLHNLPFNNAIRTMLMMCWNLLQSKQYDYGVISFDTKAPTFRDQLYSEYKSKRSKTPSELLVQIPVVKESLRHLGFLVCEQDGFEADDLIGSYARLMTQNNVAVDIYSSDRDLLQLVDSMTSVWLCVKGTKEMKEYNTDNFAEQFFGLTPKQVIEYKGLVGDNSDNLTGIKGIGPKKGIDLLKQYGTIDNIFANFDKLSKALQTILQGQIDTAKKFSFLASIKTDIKLNDDIVHAALKPIDKQALLELLDKYGIKALAQKFSQL</sequence>
<reference key="1">
    <citation type="journal article" date="1996" name="Nucleic Acids Res.">
        <title>Complete sequence analysis of the genome of the bacterium Mycoplasma pneumoniae.</title>
        <authorList>
            <person name="Himmelreich R."/>
            <person name="Hilbert H."/>
            <person name="Plagens H."/>
            <person name="Pirkl E."/>
            <person name="Li B.-C."/>
            <person name="Herrmann R."/>
        </authorList>
    </citation>
    <scope>NUCLEOTIDE SEQUENCE [LARGE SCALE GENOMIC DNA]</scope>
    <source>
        <strain>ATCC 29342 / M129 / Subtype 1</strain>
    </source>
</reference>
<organism>
    <name type="scientific">Mycoplasma pneumoniae (strain ATCC 29342 / M129 / Subtype 1)</name>
    <name type="common">Mycoplasmoides pneumoniae</name>
    <dbReference type="NCBI Taxonomy" id="272634"/>
    <lineage>
        <taxon>Bacteria</taxon>
        <taxon>Bacillati</taxon>
        <taxon>Mycoplasmatota</taxon>
        <taxon>Mycoplasmoidales</taxon>
        <taxon>Mycoplasmoidaceae</taxon>
        <taxon>Mycoplasmoides</taxon>
    </lineage>
</organism>
<gene>
    <name type="primary">polA</name>
    <name type="ordered locus">MPN_379</name>
    <name type="ORF">MP458</name>
</gene>
<accession>P75403</accession>
<proteinExistence type="inferred from homology"/>
<name>EX53_MYCPN</name>
<feature type="chain" id="PRO_0000101287" description="5'-3' exonuclease">
    <location>
        <begin position="1"/>
        <end position="291"/>
    </location>
</feature>
<feature type="domain" description="5'-3' exonuclease" evidence="2">
    <location>
        <begin position="176"/>
        <end position="269"/>
    </location>
</feature>